<gene>
    <name type="ordered locus">PHZ_c0561</name>
</gene>
<evidence type="ECO:0000255" key="1">
    <source>
        <dbReference type="HAMAP-Rule" id="MF_00652"/>
    </source>
</evidence>
<evidence type="ECO:0000256" key="2">
    <source>
        <dbReference type="SAM" id="MobiDB-lite"/>
    </source>
</evidence>
<organism>
    <name type="scientific">Phenylobacterium zucineum (strain HLK1)</name>
    <dbReference type="NCBI Taxonomy" id="450851"/>
    <lineage>
        <taxon>Bacteria</taxon>
        <taxon>Pseudomonadati</taxon>
        <taxon>Pseudomonadota</taxon>
        <taxon>Alphaproteobacteria</taxon>
        <taxon>Caulobacterales</taxon>
        <taxon>Caulobacteraceae</taxon>
        <taxon>Phenylobacterium</taxon>
    </lineage>
</organism>
<feature type="chain" id="PRO_1000131130" description="UPF0246 protein PHZ_c0561">
    <location>
        <begin position="1"/>
        <end position="266"/>
    </location>
</feature>
<feature type="region of interest" description="Disordered" evidence="2">
    <location>
        <begin position="245"/>
        <end position="266"/>
    </location>
</feature>
<comment type="similarity">
    <text evidence="1">Belongs to the UPF0246 family.</text>
</comment>
<name>Y561_PHEZH</name>
<sequence>MLIVLSPAKALDFAQPPVQAPLTAPQMTEDTSELAKVARKLTARDLSRLMSLSESLAKLNRERFQAFDPVSEEGLQAAFAFNGDVYQGLRARELDRKALAWAQDHVRILSGLYGVLRPLDAIQPYRLEMGVRLKTKRGSTLYDFWGEKVSLALNEAAQGHKDRTLVNCASGEYFGAVDRRALKLPVVSCRFLEEKDGQARIISFYAKRARGLLARYAIDNRIERAADLKGFDAAGYRFAPELSTDEEFTFARPQPPPPAASRNKED</sequence>
<reference key="1">
    <citation type="journal article" date="2008" name="BMC Genomics">
        <title>Complete genome of Phenylobacterium zucineum - a novel facultative intracellular bacterium isolated from human erythroleukemia cell line K562.</title>
        <authorList>
            <person name="Luo Y."/>
            <person name="Xu X."/>
            <person name="Ding Z."/>
            <person name="Liu Z."/>
            <person name="Zhang B."/>
            <person name="Yan Z."/>
            <person name="Sun J."/>
            <person name="Hu S."/>
            <person name="Hu X."/>
        </authorList>
    </citation>
    <scope>NUCLEOTIDE SEQUENCE [LARGE SCALE GENOMIC DNA]</scope>
    <source>
        <strain>HLK1</strain>
    </source>
</reference>
<accession>B4REY7</accession>
<proteinExistence type="inferred from homology"/>
<protein>
    <recommendedName>
        <fullName evidence="1">UPF0246 protein PHZ_c0561</fullName>
    </recommendedName>
</protein>
<dbReference type="EMBL" id="CP000747">
    <property type="protein sequence ID" value="ACG76975.1"/>
    <property type="molecule type" value="Genomic_DNA"/>
</dbReference>
<dbReference type="RefSeq" id="WP_012521123.1">
    <property type="nucleotide sequence ID" value="NC_011144.1"/>
</dbReference>
<dbReference type="SMR" id="B4REY7"/>
<dbReference type="STRING" id="450851.PHZ_c0561"/>
<dbReference type="KEGG" id="pzu:PHZ_c0561"/>
<dbReference type="eggNOG" id="COG3022">
    <property type="taxonomic scope" value="Bacteria"/>
</dbReference>
<dbReference type="HOGENOM" id="CLU_061989_0_0_5"/>
<dbReference type="OrthoDB" id="9777133at2"/>
<dbReference type="Proteomes" id="UP000001868">
    <property type="component" value="Chromosome"/>
</dbReference>
<dbReference type="GO" id="GO:0005829">
    <property type="term" value="C:cytosol"/>
    <property type="evidence" value="ECO:0007669"/>
    <property type="project" value="TreeGrafter"/>
</dbReference>
<dbReference type="GO" id="GO:0033194">
    <property type="term" value="P:response to hydroperoxide"/>
    <property type="evidence" value="ECO:0007669"/>
    <property type="project" value="TreeGrafter"/>
</dbReference>
<dbReference type="HAMAP" id="MF_00652">
    <property type="entry name" value="UPF0246"/>
    <property type="match status" value="1"/>
</dbReference>
<dbReference type="InterPro" id="IPR005583">
    <property type="entry name" value="YaaA"/>
</dbReference>
<dbReference type="NCBIfam" id="NF002542">
    <property type="entry name" value="PRK02101.1-3"/>
    <property type="match status" value="1"/>
</dbReference>
<dbReference type="PANTHER" id="PTHR30283:SF4">
    <property type="entry name" value="PEROXIDE STRESS RESISTANCE PROTEIN YAAA"/>
    <property type="match status" value="1"/>
</dbReference>
<dbReference type="PANTHER" id="PTHR30283">
    <property type="entry name" value="PEROXIDE STRESS RESPONSE PROTEIN YAAA"/>
    <property type="match status" value="1"/>
</dbReference>
<dbReference type="Pfam" id="PF03883">
    <property type="entry name" value="H2O2_YaaD"/>
    <property type="match status" value="1"/>
</dbReference>
<keyword id="KW-1185">Reference proteome</keyword>